<comment type="function">
    <text evidence="1">Functions in the N-end rule pathway of protein degradation where it conjugates Leu from its aminoacyl-tRNA to the N-termini of proteins containing an N-terminal aspartate or glutamate.</text>
</comment>
<comment type="catalytic activity">
    <reaction evidence="1">
        <text>N-terminal L-glutamyl-[protein] + L-leucyl-tRNA(Leu) = N-terminal L-leucyl-L-glutamyl-[protein] + tRNA(Leu) + H(+)</text>
        <dbReference type="Rhea" id="RHEA:50412"/>
        <dbReference type="Rhea" id="RHEA-COMP:9613"/>
        <dbReference type="Rhea" id="RHEA-COMP:9622"/>
        <dbReference type="Rhea" id="RHEA-COMP:12664"/>
        <dbReference type="Rhea" id="RHEA-COMP:12668"/>
        <dbReference type="ChEBI" id="CHEBI:15378"/>
        <dbReference type="ChEBI" id="CHEBI:64721"/>
        <dbReference type="ChEBI" id="CHEBI:78442"/>
        <dbReference type="ChEBI" id="CHEBI:78494"/>
        <dbReference type="ChEBI" id="CHEBI:133041"/>
        <dbReference type="EC" id="2.3.2.29"/>
    </reaction>
</comment>
<comment type="catalytic activity">
    <reaction evidence="1">
        <text>N-terminal L-aspartyl-[protein] + L-leucyl-tRNA(Leu) = N-terminal L-leucyl-L-aspartyl-[protein] + tRNA(Leu) + H(+)</text>
        <dbReference type="Rhea" id="RHEA:50420"/>
        <dbReference type="Rhea" id="RHEA-COMP:9613"/>
        <dbReference type="Rhea" id="RHEA-COMP:9622"/>
        <dbReference type="Rhea" id="RHEA-COMP:12669"/>
        <dbReference type="Rhea" id="RHEA-COMP:12674"/>
        <dbReference type="ChEBI" id="CHEBI:15378"/>
        <dbReference type="ChEBI" id="CHEBI:64720"/>
        <dbReference type="ChEBI" id="CHEBI:78442"/>
        <dbReference type="ChEBI" id="CHEBI:78494"/>
        <dbReference type="ChEBI" id="CHEBI:133042"/>
        <dbReference type="EC" id="2.3.2.29"/>
    </reaction>
</comment>
<comment type="subcellular location">
    <subcellularLocation>
        <location evidence="1">Cytoplasm</location>
    </subcellularLocation>
</comment>
<comment type="similarity">
    <text evidence="1">Belongs to the R-transferase family. Bpt subfamily.</text>
</comment>
<comment type="sequence caution" evidence="2">
    <conflict type="erroneous initiation">
        <sequence resource="EMBL-CDS" id="ABC90305"/>
    </conflict>
</comment>
<feature type="chain" id="PRO_0000263207" description="Aspartate/glutamate leucyltransferase">
    <location>
        <begin position="1"/>
        <end position="258"/>
    </location>
</feature>
<keyword id="KW-0012">Acyltransferase</keyword>
<keyword id="KW-0963">Cytoplasm</keyword>
<keyword id="KW-1185">Reference proteome</keyword>
<keyword id="KW-0808">Transferase</keyword>
<sequence length="258" mass="29573">MNTQTTPSPQFYLTAPAACPYLPHEMERKVFTHLVGPRAAEMNDILTQGGFRRSQNIAYRPACESCRACVSVRILAQEFEPTKSMKRVLAANSDVIATEFAAQPSSEQYSLFRRYLDFRHQQGGMSDMTVLDYAIMVEDTHVNTRIIEYRRREEGSGLEERPKGELLAAALTDTMSDGLSMVYSYFNPALERRSLGTFMILDHVRRTKALGLPHVYLGYWVQGSRKMDYKTRFQPQEHLTPRGWERFDPSSMPESTHD</sequence>
<proteinExistence type="inferred from homology"/>
<protein>
    <recommendedName>
        <fullName evidence="1">Aspartate/glutamate leucyltransferase</fullName>
        <ecNumber evidence="1">2.3.2.29</ecNumber>
    </recommendedName>
</protein>
<organism>
    <name type="scientific">Rhizobium etli (strain ATCC 51251 / DSM 11541 / JCM 21823 / NBRC 15573 / CFN 42)</name>
    <dbReference type="NCBI Taxonomy" id="347834"/>
    <lineage>
        <taxon>Bacteria</taxon>
        <taxon>Pseudomonadati</taxon>
        <taxon>Pseudomonadota</taxon>
        <taxon>Alphaproteobacteria</taxon>
        <taxon>Hyphomicrobiales</taxon>
        <taxon>Rhizobiaceae</taxon>
        <taxon>Rhizobium/Agrobacterium group</taxon>
        <taxon>Rhizobium</taxon>
    </lineage>
</organism>
<name>BPT_RHIEC</name>
<accession>Q2KA31</accession>
<dbReference type="EC" id="2.3.2.29" evidence="1"/>
<dbReference type="EMBL" id="CP000133">
    <property type="protein sequence ID" value="ABC90305.1"/>
    <property type="status" value="ALT_INIT"/>
    <property type="molecule type" value="Genomic_DNA"/>
</dbReference>
<dbReference type="RefSeq" id="WP_011424835.1">
    <property type="nucleotide sequence ID" value="NC_007761.1"/>
</dbReference>
<dbReference type="SMR" id="Q2KA31"/>
<dbReference type="KEGG" id="ret:RHE_CH01502"/>
<dbReference type="eggNOG" id="COG2935">
    <property type="taxonomic scope" value="Bacteria"/>
</dbReference>
<dbReference type="HOGENOM" id="CLU_077607_1_0_5"/>
<dbReference type="OrthoDB" id="9782022at2"/>
<dbReference type="Proteomes" id="UP000001936">
    <property type="component" value="Chromosome"/>
</dbReference>
<dbReference type="GO" id="GO:0005737">
    <property type="term" value="C:cytoplasm"/>
    <property type="evidence" value="ECO:0007669"/>
    <property type="project" value="UniProtKB-SubCell"/>
</dbReference>
<dbReference type="GO" id="GO:0004057">
    <property type="term" value="F:arginyl-tRNA--protein transferase activity"/>
    <property type="evidence" value="ECO:0007669"/>
    <property type="project" value="InterPro"/>
</dbReference>
<dbReference type="GO" id="GO:0008914">
    <property type="term" value="F:leucyl-tRNA--protein transferase activity"/>
    <property type="evidence" value="ECO:0007669"/>
    <property type="project" value="UniProtKB-UniRule"/>
</dbReference>
<dbReference type="GO" id="GO:0071596">
    <property type="term" value="P:ubiquitin-dependent protein catabolic process via the N-end rule pathway"/>
    <property type="evidence" value="ECO:0007669"/>
    <property type="project" value="InterPro"/>
</dbReference>
<dbReference type="HAMAP" id="MF_00689">
    <property type="entry name" value="Bpt"/>
    <property type="match status" value="1"/>
</dbReference>
<dbReference type="InterPro" id="IPR016181">
    <property type="entry name" value="Acyl_CoA_acyltransferase"/>
</dbReference>
<dbReference type="InterPro" id="IPR017138">
    <property type="entry name" value="Asp_Glu_LeuTrfase"/>
</dbReference>
<dbReference type="InterPro" id="IPR030700">
    <property type="entry name" value="N-end_Aminoacyl_Trfase"/>
</dbReference>
<dbReference type="InterPro" id="IPR007472">
    <property type="entry name" value="N-end_Aminoacyl_Trfase_C"/>
</dbReference>
<dbReference type="InterPro" id="IPR007471">
    <property type="entry name" value="N-end_Aminoacyl_Trfase_N"/>
</dbReference>
<dbReference type="NCBIfam" id="NF002342">
    <property type="entry name" value="PRK01305.1-3"/>
    <property type="match status" value="1"/>
</dbReference>
<dbReference type="NCBIfam" id="NF002343">
    <property type="entry name" value="PRK01305.1-4"/>
    <property type="match status" value="1"/>
</dbReference>
<dbReference type="NCBIfam" id="NF002346">
    <property type="entry name" value="PRK01305.2-3"/>
    <property type="match status" value="1"/>
</dbReference>
<dbReference type="PANTHER" id="PTHR21367">
    <property type="entry name" value="ARGININE-TRNA-PROTEIN TRANSFERASE 1"/>
    <property type="match status" value="1"/>
</dbReference>
<dbReference type="PANTHER" id="PTHR21367:SF1">
    <property type="entry name" value="ARGINYL-TRNA--PROTEIN TRANSFERASE 1"/>
    <property type="match status" value="1"/>
</dbReference>
<dbReference type="Pfam" id="PF04377">
    <property type="entry name" value="ATE_C"/>
    <property type="match status" value="1"/>
</dbReference>
<dbReference type="Pfam" id="PF04376">
    <property type="entry name" value="ATE_N"/>
    <property type="match status" value="1"/>
</dbReference>
<dbReference type="PIRSF" id="PIRSF037208">
    <property type="entry name" value="ATE_pro_prd"/>
    <property type="match status" value="1"/>
</dbReference>
<dbReference type="SUPFAM" id="SSF55729">
    <property type="entry name" value="Acyl-CoA N-acyltransferases (Nat)"/>
    <property type="match status" value="1"/>
</dbReference>
<reference key="1">
    <citation type="journal article" date="2006" name="Proc. Natl. Acad. Sci. U.S.A.">
        <title>The partitioned Rhizobium etli genome: genetic and metabolic redundancy in seven interacting replicons.</title>
        <authorList>
            <person name="Gonzalez V."/>
            <person name="Santamaria R.I."/>
            <person name="Bustos P."/>
            <person name="Hernandez-Gonzalez I."/>
            <person name="Medrano-Soto A."/>
            <person name="Moreno-Hagelsieb G."/>
            <person name="Janga S.C."/>
            <person name="Ramirez M.A."/>
            <person name="Jimenez-Jacinto V."/>
            <person name="Collado-Vides J."/>
            <person name="Davila G."/>
        </authorList>
    </citation>
    <scope>NUCLEOTIDE SEQUENCE [LARGE SCALE GENOMIC DNA]</scope>
    <source>
        <strain>ATCC 51251 / DSM 11541 / JCM 21823 / NBRC 15573 / CFN 42</strain>
    </source>
</reference>
<gene>
    <name evidence="1" type="primary">bpt</name>
    <name type="ordered locus">RHE_CH01502</name>
</gene>
<evidence type="ECO:0000255" key="1">
    <source>
        <dbReference type="HAMAP-Rule" id="MF_00689"/>
    </source>
</evidence>
<evidence type="ECO:0000305" key="2"/>